<feature type="chain" id="PRO_1000051932" description="Large ribosomal subunit protein uL2">
    <location>
        <begin position="1"/>
        <end position="277"/>
    </location>
</feature>
<feature type="region of interest" description="Disordered" evidence="2">
    <location>
        <begin position="219"/>
        <end position="277"/>
    </location>
</feature>
<feature type="compositionally biased region" description="Basic and acidic residues" evidence="2">
    <location>
        <begin position="231"/>
        <end position="241"/>
    </location>
</feature>
<feature type="compositionally biased region" description="Basic residues" evidence="2">
    <location>
        <begin position="256"/>
        <end position="277"/>
    </location>
</feature>
<name>RL2_CAMC5</name>
<dbReference type="EMBL" id="CP000767">
    <property type="protein sequence ID" value="EAT99601.1"/>
    <property type="molecule type" value="Genomic_DNA"/>
</dbReference>
<dbReference type="RefSeq" id="WP_009649696.1">
    <property type="nucleotide sequence ID" value="NC_009715.2"/>
</dbReference>
<dbReference type="SMR" id="A7H108"/>
<dbReference type="STRING" id="360105.CCV52592_1029"/>
<dbReference type="GeneID" id="61003095"/>
<dbReference type="KEGG" id="ccv:CCV52592_1029"/>
<dbReference type="HOGENOM" id="CLU_036235_2_1_7"/>
<dbReference type="OrthoDB" id="9778722at2"/>
<dbReference type="Proteomes" id="UP000006380">
    <property type="component" value="Chromosome"/>
</dbReference>
<dbReference type="GO" id="GO:0015934">
    <property type="term" value="C:large ribosomal subunit"/>
    <property type="evidence" value="ECO:0007669"/>
    <property type="project" value="InterPro"/>
</dbReference>
<dbReference type="GO" id="GO:0019843">
    <property type="term" value="F:rRNA binding"/>
    <property type="evidence" value="ECO:0007669"/>
    <property type="project" value="UniProtKB-UniRule"/>
</dbReference>
<dbReference type="GO" id="GO:0003735">
    <property type="term" value="F:structural constituent of ribosome"/>
    <property type="evidence" value="ECO:0007669"/>
    <property type="project" value="InterPro"/>
</dbReference>
<dbReference type="GO" id="GO:0016740">
    <property type="term" value="F:transferase activity"/>
    <property type="evidence" value="ECO:0007669"/>
    <property type="project" value="InterPro"/>
</dbReference>
<dbReference type="GO" id="GO:0002181">
    <property type="term" value="P:cytoplasmic translation"/>
    <property type="evidence" value="ECO:0007669"/>
    <property type="project" value="TreeGrafter"/>
</dbReference>
<dbReference type="FunFam" id="2.30.30.30:FF:000001">
    <property type="entry name" value="50S ribosomal protein L2"/>
    <property type="match status" value="1"/>
</dbReference>
<dbReference type="FunFam" id="2.40.50.140:FF:000003">
    <property type="entry name" value="50S ribosomal protein L2"/>
    <property type="match status" value="1"/>
</dbReference>
<dbReference type="FunFam" id="4.10.950.10:FF:000001">
    <property type="entry name" value="50S ribosomal protein L2"/>
    <property type="match status" value="1"/>
</dbReference>
<dbReference type="Gene3D" id="2.30.30.30">
    <property type="match status" value="1"/>
</dbReference>
<dbReference type="Gene3D" id="2.40.50.140">
    <property type="entry name" value="Nucleic acid-binding proteins"/>
    <property type="match status" value="1"/>
</dbReference>
<dbReference type="Gene3D" id="4.10.950.10">
    <property type="entry name" value="Ribosomal protein L2, domain 3"/>
    <property type="match status" value="1"/>
</dbReference>
<dbReference type="HAMAP" id="MF_01320_B">
    <property type="entry name" value="Ribosomal_uL2_B"/>
    <property type="match status" value="1"/>
</dbReference>
<dbReference type="InterPro" id="IPR012340">
    <property type="entry name" value="NA-bd_OB-fold"/>
</dbReference>
<dbReference type="InterPro" id="IPR014722">
    <property type="entry name" value="Rib_uL2_dom2"/>
</dbReference>
<dbReference type="InterPro" id="IPR002171">
    <property type="entry name" value="Ribosomal_uL2"/>
</dbReference>
<dbReference type="InterPro" id="IPR005880">
    <property type="entry name" value="Ribosomal_uL2_bac/org-type"/>
</dbReference>
<dbReference type="InterPro" id="IPR022669">
    <property type="entry name" value="Ribosomal_uL2_C"/>
</dbReference>
<dbReference type="InterPro" id="IPR022671">
    <property type="entry name" value="Ribosomal_uL2_CS"/>
</dbReference>
<dbReference type="InterPro" id="IPR014726">
    <property type="entry name" value="Ribosomal_uL2_dom3"/>
</dbReference>
<dbReference type="InterPro" id="IPR022666">
    <property type="entry name" value="Ribosomal_uL2_RNA-bd_dom"/>
</dbReference>
<dbReference type="InterPro" id="IPR008991">
    <property type="entry name" value="Translation_prot_SH3-like_sf"/>
</dbReference>
<dbReference type="NCBIfam" id="TIGR01171">
    <property type="entry name" value="rplB_bact"/>
    <property type="match status" value="1"/>
</dbReference>
<dbReference type="PANTHER" id="PTHR13691:SF5">
    <property type="entry name" value="LARGE RIBOSOMAL SUBUNIT PROTEIN UL2M"/>
    <property type="match status" value="1"/>
</dbReference>
<dbReference type="PANTHER" id="PTHR13691">
    <property type="entry name" value="RIBOSOMAL PROTEIN L2"/>
    <property type="match status" value="1"/>
</dbReference>
<dbReference type="Pfam" id="PF00181">
    <property type="entry name" value="Ribosomal_L2"/>
    <property type="match status" value="1"/>
</dbReference>
<dbReference type="Pfam" id="PF03947">
    <property type="entry name" value="Ribosomal_L2_C"/>
    <property type="match status" value="1"/>
</dbReference>
<dbReference type="PIRSF" id="PIRSF002158">
    <property type="entry name" value="Ribosomal_L2"/>
    <property type="match status" value="1"/>
</dbReference>
<dbReference type="SMART" id="SM01383">
    <property type="entry name" value="Ribosomal_L2"/>
    <property type="match status" value="1"/>
</dbReference>
<dbReference type="SMART" id="SM01382">
    <property type="entry name" value="Ribosomal_L2_C"/>
    <property type="match status" value="1"/>
</dbReference>
<dbReference type="SUPFAM" id="SSF50249">
    <property type="entry name" value="Nucleic acid-binding proteins"/>
    <property type="match status" value="1"/>
</dbReference>
<dbReference type="SUPFAM" id="SSF50104">
    <property type="entry name" value="Translation proteins SH3-like domain"/>
    <property type="match status" value="1"/>
</dbReference>
<dbReference type="PROSITE" id="PS00467">
    <property type="entry name" value="RIBOSOMAL_L2"/>
    <property type="match status" value="1"/>
</dbReference>
<evidence type="ECO:0000255" key="1">
    <source>
        <dbReference type="HAMAP-Rule" id="MF_01320"/>
    </source>
</evidence>
<evidence type="ECO:0000256" key="2">
    <source>
        <dbReference type="SAM" id="MobiDB-lite"/>
    </source>
</evidence>
<evidence type="ECO:0000305" key="3"/>
<accession>A7H108</accession>
<gene>
    <name evidence="1" type="primary">rplB</name>
    <name type="ordered locus">Ccur92_18460</name>
    <name type="ORF">CCV52592_1029</name>
</gene>
<sequence>MAIKSYKPYTPSRRYMTGLSSEDITAKPSVRSLLVKIPASGGRNNNGRITSRHKEAGAKKLYRIIDFKRKKFGIEGRVEAIEYDPNRNCRIALISYKDGEKRYIIRPNGLNVGDVIASIDEGALDIKPGNAMKLKFIPVGTIVHNIELKPGKGAQIARSAGGYAQLMGKEEKYVIVRMPSGEMRQILAECMASIGVVGNEDWANITIGKAGRNRYRGIRPQTRGSAMNPVDHPHGGGEGKKNSGRHPVTPWGKPTKGAKTRRKKASDKLIISRRKGK</sequence>
<organism>
    <name type="scientific">Campylobacter curvus (strain 525.92)</name>
    <dbReference type="NCBI Taxonomy" id="360105"/>
    <lineage>
        <taxon>Bacteria</taxon>
        <taxon>Pseudomonadati</taxon>
        <taxon>Campylobacterota</taxon>
        <taxon>Epsilonproteobacteria</taxon>
        <taxon>Campylobacterales</taxon>
        <taxon>Campylobacteraceae</taxon>
        <taxon>Campylobacter</taxon>
    </lineage>
</organism>
<comment type="function">
    <text evidence="1">One of the primary rRNA binding proteins. Required for association of the 30S and 50S subunits to form the 70S ribosome, for tRNA binding and peptide bond formation. It has been suggested to have peptidyltransferase activity; this is somewhat controversial. Makes several contacts with the 16S rRNA in the 70S ribosome.</text>
</comment>
<comment type="subunit">
    <text evidence="1">Part of the 50S ribosomal subunit. Forms a bridge to the 30S subunit in the 70S ribosome.</text>
</comment>
<comment type="similarity">
    <text evidence="1">Belongs to the universal ribosomal protein uL2 family.</text>
</comment>
<proteinExistence type="inferred from homology"/>
<reference key="1">
    <citation type="submission" date="2007-07" db="EMBL/GenBank/DDBJ databases">
        <title>Genome sequence of Campylobacter curvus 525.92 isolated from human feces.</title>
        <authorList>
            <person name="Fouts D.E."/>
            <person name="Mongodin E.F."/>
            <person name="Puiu D."/>
            <person name="Sebastian Y."/>
            <person name="Miller W.G."/>
            <person name="Mandrell R.E."/>
            <person name="Lastovica A.J."/>
            <person name="Nelson K.E."/>
        </authorList>
    </citation>
    <scope>NUCLEOTIDE SEQUENCE [LARGE SCALE GENOMIC DNA]</scope>
    <source>
        <strain>525.92</strain>
    </source>
</reference>
<keyword id="KW-1185">Reference proteome</keyword>
<keyword id="KW-0687">Ribonucleoprotein</keyword>
<keyword id="KW-0689">Ribosomal protein</keyword>
<keyword id="KW-0694">RNA-binding</keyword>
<keyword id="KW-0699">rRNA-binding</keyword>
<protein>
    <recommendedName>
        <fullName evidence="1">Large ribosomal subunit protein uL2</fullName>
    </recommendedName>
    <alternativeName>
        <fullName evidence="3">50S ribosomal protein L2</fullName>
    </alternativeName>
</protein>